<protein>
    <recommendedName>
        <fullName evidence="1">UPF0301 protein Mmwyl1_0539</fullName>
    </recommendedName>
</protein>
<organism>
    <name type="scientific">Marinomonas sp. (strain MWYL1)</name>
    <dbReference type="NCBI Taxonomy" id="400668"/>
    <lineage>
        <taxon>Bacteria</taxon>
        <taxon>Pseudomonadati</taxon>
        <taxon>Pseudomonadota</taxon>
        <taxon>Gammaproteobacteria</taxon>
        <taxon>Oceanospirillales</taxon>
        <taxon>Oceanospirillaceae</taxon>
        <taxon>Marinomonas</taxon>
    </lineage>
</organism>
<proteinExistence type="inferred from homology"/>
<sequence length="188" mass="20688">MNAFFDSFKNHFLISMPHLDDPHFEHTVIYLCEHTKAGAMGIIINRPSNVDFTELADHLGIQIHSPRLSSEPIYTGGPVEAERGFILHTTDKVWSNTLRVTDEVSLSASLEALEDIAQGNGPDAFRITLGCAGWDAGQLEAEIANNDWLVCEADLDVLFHTPSDMQFTAATRVLGIDMTRLSPDIGHG</sequence>
<dbReference type="EMBL" id="CP000749">
    <property type="protein sequence ID" value="ABR69475.1"/>
    <property type="molecule type" value="Genomic_DNA"/>
</dbReference>
<dbReference type="SMR" id="A6VSP6"/>
<dbReference type="STRING" id="400668.Mmwyl1_0539"/>
<dbReference type="KEGG" id="mmw:Mmwyl1_0539"/>
<dbReference type="eggNOG" id="COG1678">
    <property type="taxonomic scope" value="Bacteria"/>
</dbReference>
<dbReference type="HOGENOM" id="CLU_057596_1_0_6"/>
<dbReference type="OrthoDB" id="9807486at2"/>
<dbReference type="GO" id="GO:0005829">
    <property type="term" value="C:cytosol"/>
    <property type="evidence" value="ECO:0007669"/>
    <property type="project" value="TreeGrafter"/>
</dbReference>
<dbReference type="Gene3D" id="3.40.1740.10">
    <property type="entry name" value="VC0467-like"/>
    <property type="match status" value="1"/>
</dbReference>
<dbReference type="HAMAP" id="MF_00758">
    <property type="entry name" value="UPF0301"/>
    <property type="match status" value="1"/>
</dbReference>
<dbReference type="InterPro" id="IPR003774">
    <property type="entry name" value="AlgH-like"/>
</dbReference>
<dbReference type="NCBIfam" id="NF001266">
    <property type="entry name" value="PRK00228.1-1"/>
    <property type="match status" value="1"/>
</dbReference>
<dbReference type="PANTHER" id="PTHR30327">
    <property type="entry name" value="UNCHARACTERIZED PROTEIN YQGE"/>
    <property type="match status" value="1"/>
</dbReference>
<dbReference type="PANTHER" id="PTHR30327:SF1">
    <property type="entry name" value="UPF0301 PROTEIN YQGE"/>
    <property type="match status" value="1"/>
</dbReference>
<dbReference type="Pfam" id="PF02622">
    <property type="entry name" value="DUF179"/>
    <property type="match status" value="1"/>
</dbReference>
<dbReference type="SUPFAM" id="SSF143456">
    <property type="entry name" value="VC0467-like"/>
    <property type="match status" value="1"/>
</dbReference>
<reference key="1">
    <citation type="submission" date="2007-06" db="EMBL/GenBank/DDBJ databases">
        <title>Complete sequence of Marinomonas sp. MWYL1.</title>
        <authorList>
            <consortium name="US DOE Joint Genome Institute"/>
            <person name="Copeland A."/>
            <person name="Lucas S."/>
            <person name="Lapidus A."/>
            <person name="Barry K."/>
            <person name="Glavina del Rio T."/>
            <person name="Dalin E."/>
            <person name="Tice H."/>
            <person name="Pitluck S."/>
            <person name="Kiss H."/>
            <person name="Brettin T."/>
            <person name="Bruce D."/>
            <person name="Detter J.C."/>
            <person name="Han C."/>
            <person name="Schmutz J."/>
            <person name="Larimer F."/>
            <person name="Land M."/>
            <person name="Hauser L."/>
            <person name="Kyrpides N."/>
            <person name="Kim E."/>
            <person name="Johnston A.W.B."/>
            <person name="Todd J.D."/>
            <person name="Rogers R."/>
            <person name="Wexler M."/>
            <person name="Bond P.L."/>
            <person name="Li Y."/>
            <person name="Richardson P."/>
        </authorList>
    </citation>
    <scope>NUCLEOTIDE SEQUENCE [LARGE SCALE GENOMIC DNA]</scope>
    <source>
        <strain>MWYL1</strain>
    </source>
</reference>
<accession>A6VSP6</accession>
<gene>
    <name type="ordered locus">Mmwyl1_0539</name>
</gene>
<evidence type="ECO:0000255" key="1">
    <source>
        <dbReference type="HAMAP-Rule" id="MF_00758"/>
    </source>
</evidence>
<feature type="chain" id="PRO_1000083512" description="UPF0301 protein Mmwyl1_0539">
    <location>
        <begin position="1"/>
        <end position="188"/>
    </location>
</feature>
<name>Y539_MARMS</name>
<comment type="similarity">
    <text evidence="1">Belongs to the UPF0301 (AlgH) family.</text>
</comment>